<evidence type="ECO:0000255" key="1">
    <source>
        <dbReference type="HAMAP-Rule" id="MF_00238"/>
    </source>
</evidence>
<protein>
    <recommendedName>
        <fullName evidence="1">Cytidylate kinase</fullName>
        <shortName evidence="1">CK</shortName>
        <ecNumber evidence="1">2.7.4.25</ecNumber>
    </recommendedName>
    <alternativeName>
        <fullName evidence="1">Cytidine monophosphate kinase</fullName>
        <shortName evidence="1">CMP kinase</shortName>
    </alternativeName>
</protein>
<name>KCY_SALTY</name>
<keyword id="KW-0067">ATP-binding</keyword>
<keyword id="KW-0963">Cytoplasm</keyword>
<keyword id="KW-0418">Kinase</keyword>
<keyword id="KW-0547">Nucleotide-binding</keyword>
<keyword id="KW-1185">Reference proteome</keyword>
<keyword id="KW-0808">Transferase</keyword>
<accession>Q8ZQC4</accession>
<feature type="chain" id="PRO_0000131969" description="Cytidylate kinase">
    <location>
        <begin position="1"/>
        <end position="227"/>
    </location>
</feature>
<feature type="binding site" evidence="1">
    <location>
        <begin position="12"/>
        <end position="20"/>
    </location>
    <ligand>
        <name>ATP</name>
        <dbReference type="ChEBI" id="CHEBI:30616"/>
    </ligand>
</feature>
<organism>
    <name type="scientific">Salmonella typhimurium (strain LT2 / SGSC1412 / ATCC 700720)</name>
    <dbReference type="NCBI Taxonomy" id="99287"/>
    <lineage>
        <taxon>Bacteria</taxon>
        <taxon>Pseudomonadati</taxon>
        <taxon>Pseudomonadota</taxon>
        <taxon>Gammaproteobacteria</taxon>
        <taxon>Enterobacterales</taxon>
        <taxon>Enterobacteriaceae</taxon>
        <taxon>Salmonella</taxon>
    </lineage>
</organism>
<dbReference type="EC" id="2.7.4.25" evidence="1"/>
<dbReference type="EMBL" id="AE006468">
    <property type="protein sequence ID" value="AAL19914.1"/>
    <property type="molecule type" value="Genomic_DNA"/>
</dbReference>
<dbReference type="RefSeq" id="NP_459955.1">
    <property type="nucleotide sequence ID" value="NC_003197.2"/>
</dbReference>
<dbReference type="RefSeq" id="WP_000125006.1">
    <property type="nucleotide sequence ID" value="NC_003197.2"/>
</dbReference>
<dbReference type="SMR" id="Q8ZQC4"/>
<dbReference type="STRING" id="99287.STM0980"/>
<dbReference type="PaxDb" id="99287-STM0980"/>
<dbReference type="GeneID" id="1252498"/>
<dbReference type="KEGG" id="stm:STM0980"/>
<dbReference type="PATRIC" id="fig|99287.12.peg.1033"/>
<dbReference type="HOGENOM" id="CLU_079959_0_2_6"/>
<dbReference type="OMA" id="RAITWWM"/>
<dbReference type="PhylomeDB" id="Q8ZQC4"/>
<dbReference type="BioCyc" id="SENT99287:STM0980-MONOMER"/>
<dbReference type="Proteomes" id="UP000001014">
    <property type="component" value="Chromosome"/>
</dbReference>
<dbReference type="GO" id="GO:0005829">
    <property type="term" value="C:cytosol"/>
    <property type="evidence" value="ECO:0000318"/>
    <property type="project" value="GO_Central"/>
</dbReference>
<dbReference type="GO" id="GO:0004127">
    <property type="term" value="F:(d)CMP kinase activity"/>
    <property type="evidence" value="ECO:0000318"/>
    <property type="project" value="GO_Central"/>
</dbReference>
<dbReference type="GO" id="GO:0005524">
    <property type="term" value="F:ATP binding"/>
    <property type="evidence" value="ECO:0007669"/>
    <property type="project" value="UniProtKB-UniRule"/>
</dbReference>
<dbReference type="GO" id="GO:0036430">
    <property type="term" value="F:CMP kinase activity"/>
    <property type="evidence" value="ECO:0007669"/>
    <property type="project" value="RHEA"/>
</dbReference>
<dbReference type="GO" id="GO:0036431">
    <property type="term" value="F:dCMP kinase activity"/>
    <property type="evidence" value="ECO:0007669"/>
    <property type="project" value="RHEA"/>
</dbReference>
<dbReference type="GO" id="GO:0015949">
    <property type="term" value="P:nucleobase-containing small molecule interconversion"/>
    <property type="evidence" value="ECO:0000318"/>
    <property type="project" value="GO_Central"/>
</dbReference>
<dbReference type="GO" id="GO:0006220">
    <property type="term" value="P:pyrimidine nucleotide metabolic process"/>
    <property type="evidence" value="ECO:0007669"/>
    <property type="project" value="UniProtKB-UniRule"/>
</dbReference>
<dbReference type="CDD" id="cd02020">
    <property type="entry name" value="CMPK"/>
    <property type="match status" value="1"/>
</dbReference>
<dbReference type="FunFam" id="3.40.50.300:FF:000262">
    <property type="entry name" value="Cytidylate kinase"/>
    <property type="match status" value="1"/>
</dbReference>
<dbReference type="Gene3D" id="3.40.50.300">
    <property type="entry name" value="P-loop containing nucleotide triphosphate hydrolases"/>
    <property type="match status" value="1"/>
</dbReference>
<dbReference type="HAMAP" id="MF_00238">
    <property type="entry name" value="Cytidyl_kinase_type1"/>
    <property type="match status" value="1"/>
</dbReference>
<dbReference type="InterPro" id="IPR003136">
    <property type="entry name" value="Cytidylate_kin"/>
</dbReference>
<dbReference type="InterPro" id="IPR011994">
    <property type="entry name" value="Cytidylate_kinase_dom"/>
</dbReference>
<dbReference type="InterPro" id="IPR027417">
    <property type="entry name" value="P-loop_NTPase"/>
</dbReference>
<dbReference type="NCBIfam" id="TIGR00017">
    <property type="entry name" value="cmk"/>
    <property type="match status" value="1"/>
</dbReference>
<dbReference type="PANTHER" id="PTHR21299:SF2">
    <property type="entry name" value="CYTIDYLATE KINASE"/>
    <property type="match status" value="1"/>
</dbReference>
<dbReference type="PANTHER" id="PTHR21299">
    <property type="entry name" value="CYTIDYLATE KINASE/PANTOATE-BETA-ALANINE LIGASE"/>
    <property type="match status" value="1"/>
</dbReference>
<dbReference type="Pfam" id="PF02224">
    <property type="entry name" value="Cytidylate_kin"/>
    <property type="match status" value="1"/>
</dbReference>
<dbReference type="SUPFAM" id="SSF52540">
    <property type="entry name" value="P-loop containing nucleoside triphosphate hydrolases"/>
    <property type="match status" value="1"/>
</dbReference>
<reference key="1">
    <citation type="journal article" date="2001" name="Nature">
        <title>Complete genome sequence of Salmonella enterica serovar Typhimurium LT2.</title>
        <authorList>
            <person name="McClelland M."/>
            <person name="Sanderson K.E."/>
            <person name="Spieth J."/>
            <person name="Clifton S.W."/>
            <person name="Latreille P."/>
            <person name="Courtney L."/>
            <person name="Porwollik S."/>
            <person name="Ali J."/>
            <person name="Dante M."/>
            <person name="Du F."/>
            <person name="Hou S."/>
            <person name="Layman D."/>
            <person name="Leonard S."/>
            <person name="Nguyen C."/>
            <person name="Scott K."/>
            <person name="Holmes A."/>
            <person name="Grewal N."/>
            <person name="Mulvaney E."/>
            <person name="Ryan E."/>
            <person name="Sun H."/>
            <person name="Florea L."/>
            <person name="Miller W."/>
            <person name="Stoneking T."/>
            <person name="Nhan M."/>
            <person name="Waterston R."/>
            <person name="Wilson R.K."/>
        </authorList>
    </citation>
    <scope>NUCLEOTIDE SEQUENCE [LARGE SCALE GENOMIC DNA]</scope>
    <source>
        <strain>LT2 / SGSC1412 / ATCC 700720</strain>
    </source>
</reference>
<sequence>MTAIAPVITIDGPSGAGKGTLCKAMAEALQWHLLDSGAIYRVLALAALHHHVDLASEDALVPLASHLDVRFVSTDGNLEVILEGEDVSGEIRTQEVANAASQVAAFPRVREALLRRQRAFREAPGLIADGRDMGTVVFPDAPVKIFLDASSEERAHRRMLQLQENGFSVNFERLLAEIKERDDRDRHRAVAPLVPAADALVLDSTRLSIEQVIEKALQYARQKLALA</sequence>
<comment type="catalytic activity">
    <reaction evidence="1">
        <text>CMP + ATP = CDP + ADP</text>
        <dbReference type="Rhea" id="RHEA:11600"/>
        <dbReference type="ChEBI" id="CHEBI:30616"/>
        <dbReference type="ChEBI" id="CHEBI:58069"/>
        <dbReference type="ChEBI" id="CHEBI:60377"/>
        <dbReference type="ChEBI" id="CHEBI:456216"/>
        <dbReference type="EC" id="2.7.4.25"/>
    </reaction>
</comment>
<comment type="catalytic activity">
    <reaction evidence="1">
        <text>dCMP + ATP = dCDP + ADP</text>
        <dbReference type="Rhea" id="RHEA:25094"/>
        <dbReference type="ChEBI" id="CHEBI:30616"/>
        <dbReference type="ChEBI" id="CHEBI:57566"/>
        <dbReference type="ChEBI" id="CHEBI:58593"/>
        <dbReference type="ChEBI" id="CHEBI:456216"/>
        <dbReference type="EC" id="2.7.4.25"/>
    </reaction>
</comment>
<comment type="subcellular location">
    <subcellularLocation>
        <location evidence="1">Cytoplasm</location>
    </subcellularLocation>
</comment>
<comment type="similarity">
    <text evidence="1">Belongs to the cytidylate kinase family. Type 1 subfamily.</text>
</comment>
<gene>
    <name evidence="1" type="primary">cmk</name>
    <name type="ordered locus">STM0980</name>
</gene>
<proteinExistence type="inferred from homology"/>